<organism>
    <name type="scientific">Saccharomyces cerevisiae (strain FostersB)</name>
    <name type="common">Baker's yeast</name>
    <dbReference type="NCBI Taxonomy" id="764102"/>
    <lineage>
        <taxon>Eukaryota</taxon>
        <taxon>Fungi</taxon>
        <taxon>Dikarya</taxon>
        <taxon>Ascomycota</taxon>
        <taxon>Saccharomycotina</taxon>
        <taxon>Saccharomycetes</taxon>
        <taxon>Saccharomycetales</taxon>
        <taxon>Saccharomycetaceae</taxon>
        <taxon>Saccharomyces</taxon>
    </lineage>
</organism>
<keyword id="KW-0963">Cytoplasm</keyword>
<keyword id="KW-0539">Nucleus</keyword>
<keyword id="KW-0597">Phosphoprotein</keyword>
<feature type="chain" id="PRO_0000410818" description="Protein HRI1">
    <location>
        <begin position="1"/>
        <end position="244"/>
    </location>
</feature>
<feature type="modified residue" description="Phosphoserine" evidence="2">
    <location>
        <position position="143"/>
    </location>
</feature>
<reference key="1">
    <citation type="journal article" date="2011" name="PLoS Genet.">
        <title>Whole-genome comparison reveals novel genetic elements that characterize the genome of industrial strains of Saccharomyces cerevisiae.</title>
        <authorList>
            <person name="Borneman A.R."/>
            <person name="Desany B.A."/>
            <person name="Riches D."/>
            <person name="Affourtit J.P."/>
            <person name="Forgan A.H."/>
            <person name="Pretorius I.S."/>
            <person name="Egholm M."/>
            <person name="Chambers P.J."/>
        </authorList>
    </citation>
    <scope>NUCLEOTIDE SEQUENCE [LARGE SCALE GENOMIC DNA]</scope>
    <source>
        <strain>FostersB</strain>
    </source>
</reference>
<protein>
    <recommendedName>
        <fullName>Protein HRI1</fullName>
    </recommendedName>
    <alternativeName>
        <fullName>HRR25-interacting protein 1</fullName>
    </alternativeName>
</protein>
<gene>
    <name type="primary">HRI1</name>
    <name type="ORF">FOSTERSB_3311</name>
</gene>
<name>HRI1_YEASB</name>
<proteinExistence type="inferred from homology"/>
<sequence length="244" mass="27529">MPALLKRLLFQVGPHPNERTFTLSSVSTDGHYISLRPFVKPSGDELSFPFEWAFAGTNETVKVNDQGNGVVTQDFNFWLDTNVYLNVPNTHRGEVNTTWKNWDSGCVEETGAVYPFGADKESVSFRELWQPVDPSREDLVIVSPNNEKFSSNARSIVLKVTDEAYDGLVIVIGRWIQGFLSQKNNNTIEGLNFIRLLEKDSGKSEFLLSYGKEVNKIPQSYENLKKGSTVTSNGLNWEVIEYHA</sequence>
<comment type="subunit">
    <text evidence="1">Interacts with HRR25. May interact with SEC72.</text>
</comment>
<comment type="subcellular location">
    <subcellularLocation>
        <location evidence="1">Cytoplasm</location>
    </subcellularLocation>
    <subcellularLocation>
        <location evidence="1">Nucleus</location>
    </subcellularLocation>
</comment>
<comment type="similarity">
    <text evidence="3">Belongs to the HRI1 family.</text>
</comment>
<evidence type="ECO:0000250" key="1"/>
<evidence type="ECO:0000250" key="2">
    <source>
        <dbReference type="UniProtKB" id="Q05905"/>
    </source>
</evidence>
<evidence type="ECO:0000305" key="3"/>
<accession>E7Q714</accession>
<dbReference type="EMBL" id="AEHH01000052">
    <property type="protein sequence ID" value="EGA57615.1"/>
    <property type="molecule type" value="Genomic_DNA"/>
</dbReference>
<dbReference type="SMR" id="E7Q714"/>
<dbReference type="HOGENOM" id="CLU_097607_0_0_1"/>
<dbReference type="OrthoDB" id="4045395at2759"/>
<dbReference type="GO" id="GO:0005737">
    <property type="term" value="C:cytoplasm"/>
    <property type="evidence" value="ECO:0007669"/>
    <property type="project" value="UniProtKB-SubCell"/>
</dbReference>
<dbReference type="GO" id="GO:0005634">
    <property type="term" value="C:nucleus"/>
    <property type="evidence" value="ECO:0007669"/>
    <property type="project" value="UniProtKB-SubCell"/>
</dbReference>
<dbReference type="CDD" id="cd11693">
    <property type="entry name" value="HRI1_C_like"/>
    <property type="match status" value="1"/>
</dbReference>
<dbReference type="CDD" id="cd11692">
    <property type="entry name" value="HRI1_N_like"/>
    <property type="match status" value="1"/>
</dbReference>
<dbReference type="Gene3D" id="2.40.128.310">
    <property type="entry name" value="Protein HRI1, C-terminal domain"/>
    <property type="match status" value="1"/>
</dbReference>
<dbReference type="Gene3D" id="2.40.128.320">
    <property type="entry name" value="Protein HRI1, N-terminal domain"/>
    <property type="match status" value="1"/>
</dbReference>
<dbReference type="InterPro" id="IPR031818">
    <property type="entry name" value="Hri1"/>
</dbReference>
<dbReference type="InterPro" id="IPR038744">
    <property type="entry name" value="Hri1_N"/>
</dbReference>
<dbReference type="InterPro" id="IPR043047">
    <property type="entry name" value="Hri1_N_sf"/>
</dbReference>
<dbReference type="Pfam" id="PF16815">
    <property type="entry name" value="HRI1"/>
    <property type="match status" value="1"/>
</dbReference>